<name>ABHD3_MOUSE</name>
<organism>
    <name type="scientific">Mus musculus</name>
    <name type="common">Mouse</name>
    <dbReference type="NCBI Taxonomy" id="10090"/>
    <lineage>
        <taxon>Eukaryota</taxon>
        <taxon>Metazoa</taxon>
        <taxon>Chordata</taxon>
        <taxon>Craniata</taxon>
        <taxon>Vertebrata</taxon>
        <taxon>Euteleostomi</taxon>
        <taxon>Mammalia</taxon>
        <taxon>Eutheria</taxon>
        <taxon>Euarchontoglires</taxon>
        <taxon>Glires</taxon>
        <taxon>Rodentia</taxon>
        <taxon>Myomorpha</taxon>
        <taxon>Muroidea</taxon>
        <taxon>Muridae</taxon>
        <taxon>Murinae</taxon>
        <taxon>Mus</taxon>
        <taxon>Mus</taxon>
    </lineage>
</organism>
<reference key="1">
    <citation type="journal article" date="2002" name="Biochem. Biophys. Res. Commun.">
        <title>Cloning and tissue distribution of three murine alpha/beta hydrolase fold protein cDNAs.</title>
        <authorList>
            <person name="Edgar A.J."/>
            <person name="Polak J.M."/>
        </authorList>
    </citation>
    <scope>NUCLEOTIDE SEQUENCE [MRNA] (ISOFORM 1)</scope>
    <scope>TISSUE SPECIFICITY</scope>
    <scope>DEVELOPMENTAL STAGE</scope>
    <source>
        <strain>BALB/cJ</strain>
        <tissue>Lung</tissue>
    </source>
</reference>
<reference key="2">
    <citation type="journal article" date="2005" name="Science">
        <title>The transcriptional landscape of the mammalian genome.</title>
        <authorList>
            <person name="Carninci P."/>
            <person name="Kasukawa T."/>
            <person name="Katayama S."/>
            <person name="Gough J."/>
            <person name="Frith M.C."/>
            <person name="Maeda N."/>
            <person name="Oyama R."/>
            <person name="Ravasi T."/>
            <person name="Lenhard B."/>
            <person name="Wells C."/>
            <person name="Kodzius R."/>
            <person name="Shimokawa K."/>
            <person name="Bajic V.B."/>
            <person name="Brenner S.E."/>
            <person name="Batalov S."/>
            <person name="Forrest A.R."/>
            <person name="Zavolan M."/>
            <person name="Davis M.J."/>
            <person name="Wilming L.G."/>
            <person name="Aidinis V."/>
            <person name="Allen J.E."/>
            <person name="Ambesi-Impiombato A."/>
            <person name="Apweiler R."/>
            <person name="Aturaliya R.N."/>
            <person name="Bailey T.L."/>
            <person name="Bansal M."/>
            <person name="Baxter L."/>
            <person name="Beisel K.W."/>
            <person name="Bersano T."/>
            <person name="Bono H."/>
            <person name="Chalk A.M."/>
            <person name="Chiu K.P."/>
            <person name="Choudhary V."/>
            <person name="Christoffels A."/>
            <person name="Clutterbuck D.R."/>
            <person name="Crowe M.L."/>
            <person name="Dalla E."/>
            <person name="Dalrymple B.P."/>
            <person name="de Bono B."/>
            <person name="Della Gatta G."/>
            <person name="di Bernardo D."/>
            <person name="Down T."/>
            <person name="Engstrom P."/>
            <person name="Fagiolini M."/>
            <person name="Faulkner G."/>
            <person name="Fletcher C.F."/>
            <person name="Fukushima T."/>
            <person name="Furuno M."/>
            <person name="Futaki S."/>
            <person name="Gariboldi M."/>
            <person name="Georgii-Hemming P."/>
            <person name="Gingeras T.R."/>
            <person name="Gojobori T."/>
            <person name="Green R.E."/>
            <person name="Gustincich S."/>
            <person name="Harbers M."/>
            <person name="Hayashi Y."/>
            <person name="Hensch T.K."/>
            <person name="Hirokawa N."/>
            <person name="Hill D."/>
            <person name="Huminiecki L."/>
            <person name="Iacono M."/>
            <person name="Ikeo K."/>
            <person name="Iwama A."/>
            <person name="Ishikawa T."/>
            <person name="Jakt M."/>
            <person name="Kanapin A."/>
            <person name="Katoh M."/>
            <person name="Kawasawa Y."/>
            <person name="Kelso J."/>
            <person name="Kitamura H."/>
            <person name="Kitano H."/>
            <person name="Kollias G."/>
            <person name="Krishnan S.P."/>
            <person name="Kruger A."/>
            <person name="Kummerfeld S.K."/>
            <person name="Kurochkin I.V."/>
            <person name="Lareau L.F."/>
            <person name="Lazarevic D."/>
            <person name="Lipovich L."/>
            <person name="Liu J."/>
            <person name="Liuni S."/>
            <person name="McWilliam S."/>
            <person name="Madan Babu M."/>
            <person name="Madera M."/>
            <person name="Marchionni L."/>
            <person name="Matsuda H."/>
            <person name="Matsuzawa S."/>
            <person name="Miki H."/>
            <person name="Mignone F."/>
            <person name="Miyake S."/>
            <person name="Morris K."/>
            <person name="Mottagui-Tabar S."/>
            <person name="Mulder N."/>
            <person name="Nakano N."/>
            <person name="Nakauchi H."/>
            <person name="Ng P."/>
            <person name="Nilsson R."/>
            <person name="Nishiguchi S."/>
            <person name="Nishikawa S."/>
            <person name="Nori F."/>
            <person name="Ohara O."/>
            <person name="Okazaki Y."/>
            <person name="Orlando V."/>
            <person name="Pang K.C."/>
            <person name="Pavan W.J."/>
            <person name="Pavesi G."/>
            <person name="Pesole G."/>
            <person name="Petrovsky N."/>
            <person name="Piazza S."/>
            <person name="Reed J."/>
            <person name="Reid J.F."/>
            <person name="Ring B.Z."/>
            <person name="Ringwald M."/>
            <person name="Rost B."/>
            <person name="Ruan Y."/>
            <person name="Salzberg S.L."/>
            <person name="Sandelin A."/>
            <person name="Schneider C."/>
            <person name="Schoenbach C."/>
            <person name="Sekiguchi K."/>
            <person name="Semple C.A."/>
            <person name="Seno S."/>
            <person name="Sessa L."/>
            <person name="Sheng Y."/>
            <person name="Shibata Y."/>
            <person name="Shimada H."/>
            <person name="Shimada K."/>
            <person name="Silva D."/>
            <person name="Sinclair B."/>
            <person name="Sperling S."/>
            <person name="Stupka E."/>
            <person name="Sugiura K."/>
            <person name="Sultana R."/>
            <person name="Takenaka Y."/>
            <person name="Taki K."/>
            <person name="Tammoja K."/>
            <person name="Tan S.L."/>
            <person name="Tang S."/>
            <person name="Taylor M.S."/>
            <person name="Tegner J."/>
            <person name="Teichmann S.A."/>
            <person name="Ueda H.R."/>
            <person name="van Nimwegen E."/>
            <person name="Verardo R."/>
            <person name="Wei C.L."/>
            <person name="Yagi K."/>
            <person name="Yamanishi H."/>
            <person name="Zabarovsky E."/>
            <person name="Zhu S."/>
            <person name="Zimmer A."/>
            <person name="Hide W."/>
            <person name="Bult C."/>
            <person name="Grimmond S.M."/>
            <person name="Teasdale R.D."/>
            <person name="Liu E.T."/>
            <person name="Brusic V."/>
            <person name="Quackenbush J."/>
            <person name="Wahlestedt C."/>
            <person name="Mattick J.S."/>
            <person name="Hume D.A."/>
            <person name="Kai C."/>
            <person name="Sasaki D."/>
            <person name="Tomaru Y."/>
            <person name="Fukuda S."/>
            <person name="Kanamori-Katayama M."/>
            <person name="Suzuki M."/>
            <person name="Aoki J."/>
            <person name="Arakawa T."/>
            <person name="Iida J."/>
            <person name="Imamura K."/>
            <person name="Itoh M."/>
            <person name="Kato T."/>
            <person name="Kawaji H."/>
            <person name="Kawagashira N."/>
            <person name="Kawashima T."/>
            <person name="Kojima M."/>
            <person name="Kondo S."/>
            <person name="Konno H."/>
            <person name="Nakano K."/>
            <person name="Ninomiya N."/>
            <person name="Nishio T."/>
            <person name="Okada M."/>
            <person name="Plessy C."/>
            <person name="Shibata K."/>
            <person name="Shiraki T."/>
            <person name="Suzuki S."/>
            <person name="Tagami M."/>
            <person name="Waki K."/>
            <person name="Watahiki A."/>
            <person name="Okamura-Oho Y."/>
            <person name="Suzuki H."/>
            <person name="Kawai J."/>
            <person name="Hayashizaki Y."/>
        </authorList>
    </citation>
    <scope>NUCLEOTIDE SEQUENCE [LARGE SCALE MRNA] (ISOFORMS 1 AND 2)</scope>
    <source>
        <strain>C57BL/6J</strain>
        <tissue>Medulla oblongata</tissue>
    </source>
</reference>
<reference key="3">
    <citation type="journal article" date="2004" name="Genome Res.">
        <title>The status, quality, and expansion of the NIH full-length cDNA project: the Mammalian Gene Collection (MGC).</title>
        <authorList>
            <consortium name="The MGC Project Team"/>
        </authorList>
    </citation>
    <scope>NUCLEOTIDE SEQUENCE [LARGE SCALE MRNA] (ISOFORM 1)</scope>
    <source>
        <strain>FVB/N</strain>
        <tissue>Kidney</tissue>
    </source>
</reference>
<reference key="4">
    <citation type="journal article" date="2010" name="Cell">
        <title>A tissue-specific atlas of mouse protein phosphorylation and expression.</title>
        <authorList>
            <person name="Huttlin E.L."/>
            <person name="Jedrychowski M.P."/>
            <person name="Elias J.E."/>
            <person name="Goswami T."/>
            <person name="Rad R."/>
            <person name="Beausoleil S.A."/>
            <person name="Villen J."/>
            <person name="Haas W."/>
            <person name="Sowa M.E."/>
            <person name="Gygi S.P."/>
        </authorList>
    </citation>
    <scope>IDENTIFICATION BY MASS SPECTROMETRY [LARGE SCALE ANALYSIS]</scope>
    <source>
        <tissue>Brain</tissue>
        <tissue>Liver</tissue>
    </source>
</reference>
<reference key="5">
    <citation type="journal article" date="2011" name="Nat. Chem. Biol.">
        <title>Metabolomics annotates ABHD3 as a physiologic regulator of medium-chain phospholipids.</title>
        <authorList>
            <person name="Long J.Z."/>
            <person name="Cisar J.S."/>
            <person name="Milliken D."/>
            <person name="Niessen S."/>
            <person name="Wang C."/>
            <person name="Trauger S.A."/>
            <person name="Siuzdak G."/>
            <person name="Cravatt B.F."/>
        </authorList>
    </citation>
    <scope>FUNCTION</scope>
    <scope>DISRUPTION PHENOTYPE</scope>
    <scope>CATALYTIC ACTIVITY</scope>
    <scope>MUTAGENESIS OF SER-220</scope>
</reference>
<protein>
    <recommendedName>
        <fullName evidence="7">Phospholipase ABHD3</fullName>
        <ecNumber evidence="4">3.1.1.32</ecNumber>
        <ecNumber evidence="4">3.1.1.4</ecNumber>
    </recommendedName>
    <alternativeName>
        <fullName evidence="9">Abhydrolase domain-containing protein 3</fullName>
    </alternativeName>
    <alternativeName>
        <fullName evidence="5">Lung alpha/beta hydrolase 3</fullName>
        <shortName evidence="5">MmLABH3</shortName>
    </alternativeName>
</protein>
<comment type="function">
    <text evidence="4">Phospholipase that may play a role in phospholipids remodeling. May selectively cleave myristate (C14)-containing phosphatidylcholines through its predominant phospholipase 1 activity, cleaving preferentially acyl groups in sn1 position. In parallel, may have a minor phospholipase 2 activity acting on acyl groups in position sn2. In addition to (C14)-containing phosphatidylcholines, may also act on other medium-chain-containing and oxidatively truncated phospholipids.</text>
</comment>
<comment type="catalytic activity">
    <reaction evidence="4">
        <text>a 1,2-diacyl-sn-glycero-3-phosphocholine + H2O = a 1-acyl-sn-glycero-3-phosphocholine + a fatty acid + H(+)</text>
        <dbReference type="Rhea" id="RHEA:15801"/>
        <dbReference type="ChEBI" id="CHEBI:15377"/>
        <dbReference type="ChEBI" id="CHEBI:15378"/>
        <dbReference type="ChEBI" id="CHEBI:28868"/>
        <dbReference type="ChEBI" id="CHEBI:57643"/>
        <dbReference type="ChEBI" id="CHEBI:58168"/>
        <dbReference type="EC" id="3.1.1.4"/>
    </reaction>
    <physiologicalReaction direction="left-to-right" evidence="8">
        <dbReference type="Rhea" id="RHEA:15802"/>
    </physiologicalReaction>
</comment>
<comment type="catalytic activity">
    <reaction evidence="4">
        <text>a 1,2-diacyl-sn-glycero-3-phosphocholine + H2O = a 2-acyl-sn-glycero-3-phosphocholine + a fatty acid + H(+)</text>
        <dbReference type="Rhea" id="RHEA:18689"/>
        <dbReference type="ChEBI" id="CHEBI:15377"/>
        <dbReference type="ChEBI" id="CHEBI:15378"/>
        <dbReference type="ChEBI" id="CHEBI:28868"/>
        <dbReference type="ChEBI" id="CHEBI:57643"/>
        <dbReference type="ChEBI" id="CHEBI:57875"/>
        <dbReference type="EC" id="3.1.1.32"/>
    </reaction>
    <physiologicalReaction direction="left-to-right" evidence="8">
        <dbReference type="Rhea" id="RHEA:18690"/>
    </physiologicalReaction>
</comment>
<comment type="catalytic activity">
    <reaction evidence="4">
        <text>1-tetradecanoyl-2-(9Z,12Z-octadecadienoyl)-sn-glycero-3-phosphocholine + H2O = 2-(9Z,12Z-octadecadienoyl)-sn-glycero-3-phosphocholine + tetradecanoate + H(+)</text>
        <dbReference type="Rhea" id="RHEA:54388"/>
        <dbReference type="ChEBI" id="CHEBI:15377"/>
        <dbReference type="ChEBI" id="CHEBI:15378"/>
        <dbReference type="ChEBI" id="CHEBI:30807"/>
        <dbReference type="ChEBI" id="CHEBI:76084"/>
        <dbReference type="ChEBI" id="CHEBI:86094"/>
    </reaction>
    <physiologicalReaction direction="left-to-right" evidence="8">
        <dbReference type="Rhea" id="RHEA:54389"/>
    </physiologicalReaction>
</comment>
<comment type="catalytic activity">
    <reaction evidence="4">
        <text>1-tetradecanoyl-2-(9Z,12Z-octadecadienoyl)-sn-glycero-3-phosphocholine + H2O = 1-tetradecanoyl-sn-glycero-3-phosphocholine + (9Z,12Z)-octadecadienoate + H(+)</text>
        <dbReference type="Rhea" id="RHEA:54392"/>
        <dbReference type="ChEBI" id="CHEBI:15377"/>
        <dbReference type="ChEBI" id="CHEBI:15378"/>
        <dbReference type="ChEBI" id="CHEBI:30245"/>
        <dbReference type="ChEBI" id="CHEBI:64489"/>
        <dbReference type="ChEBI" id="CHEBI:86094"/>
    </reaction>
    <physiologicalReaction direction="left-to-right" evidence="8">
        <dbReference type="Rhea" id="RHEA:54393"/>
    </physiologicalReaction>
</comment>
<comment type="catalytic activity">
    <reaction evidence="4">
        <text>1-tetradecanoyl-2-(5Z,8Z,11Z,14Z-eicosatetraenoyl)-sn-glycero-3-phosphocholine + H2O = 2-(5Z,8Z,11Z,14Z)-eicosatetraenoyl-sn-glycero-3-phosphocholine + tetradecanoate + H(+)</text>
        <dbReference type="Rhea" id="RHEA:54396"/>
        <dbReference type="ChEBI" id="CHEBI:15377"/>
        <dbReference type="ChEBI" id="CHEBI:15378"/>
        <dbReference type="ChEBI" id="CHEBI:30807"/>
        <dbReference type="ChEBI" id="CHEBI:76079"/>
        <dbReference type="ChEBI" id="CHEBI:86102"/>
    </reaction>
    <physiologicalReaction direction="left-to-right" evidence="8">
        <dbReference type="Rhea" id="RHEA:54397"/>
    </physiologicalReaction>
</comment>
<comment type="catalytic activity">
    <reaction evidence="4">
        <text>1-tetradecanoyl-2-(4Z,7Z,10Z,13Z,16Z,19Z-docosahexaenoyl)-sn-glycero-3-phosphocholine + H2O = 2-(4Z,7Z,10Z,13Z,16Z,19Z-docosahexaenoyl)-sn-glycero-3-phosphocholine + tetradecanoate + H(+)</text>
        <dbReference type="Rhea" id="RHEA:54400"/>
        <dbReference type="ChEBI" id="CHEBI:15377"/>
        <dbReference type="ChEBI" id="CHEBI:15378"/>
        <dbReference type="ChEBI" id="CHEBI:30807"/>
        <dbReference type="ChEBI" id="CHEBI:76085"/>
        <dbReference type="ChEBI" id="CHEBI:86162"/>
    </reaction>
    <physiologicalReaction direction="left-to-right" evidence="8">
        <dbReference type="Rhea" id="RHEA:54401"/>
    </physiologicalReaction>
</comment>
<comment type="catalytic activity">
    <reaction evidence="4">
        <text>1,2-ditetradecanoyl-sn-glycero-3-phosphocholine + H2O = 2-tetradecanoyl-sn-glycero-3-phosphocholine + tetradecanoate + H(+)</text>
        <dbReference type="Rhea" id="RHEA:54404"/>
        <dbReference type="ChEBI" id="CHEBI:15377"/>
        <dbReference type="ChEBI" id="CHEBI:15378"/>
        <dbReference type="ChEBI" id="CHEBI:30807"/>
        <dbReference type="ChEBI" id="CHEBI:45240"/>
        <dbReference type="ChEBI" id="CHEBI:131738"/>
    </reaction>
    <physiologicalReaction direction="left-to-right" evidence="8">
        <dbReference type="Rhea" id="RHEA:54405"/>
    </physiologicalReaction>
</comment>
<comment type="catalytic activity">
    <reaction evidence="4">
        <text>1-octadecanoyl-2-acetyl-sn-glycero-3-phosphocholine + H2O = 1-octadecanoyl-sn-glycero-3-phosphocholine + acetate + H(+)</text>
        <dbReference type="Rhea" id="RHEA:54408"/>
        <dbReference type="ChEBI" id="CHEBI:15377"/>
        <dbReference type="ChEBI" id="CHEBI:15378"/>
        <dbReference type="ChEBI" id="CHEBI:30089"/>
        <dbReference type="ChEBI" id="CHEBI:73858"/>
        <dbReference type="ChEBI" id="CHEBI:75220"/>
    </reaction>
    <physiologicalReaction direction="left-to-right" evidence="8">
        <dbReference type="Rhea" id="RHEA:54409"/>
    </physiologicalReaction>
</comment>
<comment type="catalytic activity">
    <reaction evidence="4">
        <text>1,2-ditetradecanoyl-sn-glycero-3-phosphocholine + H2O = 1-tetradecanoyl-sn-glycero-3-phosphocholine + tetradecanoate + H(+)</text>
        <dbReference type="Rhea" id="RHEA:54456"/>
        <dbReference type="ChEBI" id="CHEBI:15377"/>
        <dbReference type="ChEBI" id="CHEBI:15378"/>
        <dbReference type="ChEBI" id="CHEBI:30807"/>
        <dbReference type="ChEBI" id="CHEBI:45240"/>
        <dbReference type="ChEBI" id="CHEBI:64489"/>
    </reaction>
    <physiologicalReaction direction="left-to-right" evidence="8">
        <dbReference type="Rhea" id="RHEA:54457"/>
    </physiologicalReaction>
</comment>
<comment type="catalytic activity">
    <reaction evidence="4">
        <text>1-octadecanoyl-2-pentanoyl-sn-glycero-3-phosphocholine + H2O = pentanoate + 1-octadecanoyl-sn-glycero-3-phosphocholine + H(+)</text>
        <dbReference type="Rhea" id="RHEA:54460"/>
        <dbReference type="ChEBI" id="CHEBI:15377"/>
        <dbReference type="ChEBI" id="CHEBI:15378"/>
        <dbReference type="ChEBI" id="CHEBI:31011"/>
        <dbReference type="ChEBI" id="CHEBI:73858"/>
        <dbReference type="ChEBI" id="CHEBI:138211"/>
    </reaction>
    <physiologicalReaction direction="left-to-right" evidence="8">
        <dbReference type="Rhea" id="RHEA:54461"/>
    </physiologicalReaction>
</comment>
<comment type="catalytic activity">
    <reaction evidence="4">
        <text>1-octadecanoyl-2-hexanoyl-sn-glycero-3-phosphocholine + H2O = hexanoate + 1-octadecanoyl-sn-glycero-3-phosphocholine + H(+)</text>
        <dbReference type="Rhea" id="RHEA:54464"/>
        <dbReference type="ChEBI" id="CHEBI:15377"/>
        <dbReference type="ChEBI" id="CHEBI:15378"/>
        <dbReference type="ChEBI" id="CHEBI:17120"/>
        <dbReference type="ChEBI" id="CHEBI:73858"/>
        <dbReference type="ChEBI" id="CHEBI:138212"/>
    </reaction>
    <physiologicalReaction direction="left-to-right" evidence="8">
        <dbReference type="Rhea" id="RHEA:54465"/>
    </physiologicalReaction>
</comment>
<comment type="catalytic activity">
    <reaction evidence="4">
        <text>1-octadecanoyl-2-octanoyl-sn-glycero-3-phosphocholine + H2O = 1-octadecanoyl-sn-glycero-3-phosphocholine + octanoate + H(+)</text>
        <dbReference type="Rhea" id="RHEA:54468"/>
        <dbReference type="ChEBI" id="CHEBI:15377"/>
        <dbReference type="ChEBI" id="CHEBI:15378"/>
        <dbReference type="ChEBI" id="CHEBI:25646"/>
        <dbReference type="ChEBI" id="CHEBI:73858"/>
        <dbReference type="ChEBI" id="CHEBI:138213"/>
    </reaction>
    <physiologicalReaction direction="left-to-right" evidence="8">
        <dbReference type="Rhea" id="RHEA:54469"/>
    </physiologicalReaction>
</comment>
<comment type="catalytic activity">
    <reaction evidence="4">
        <text>1-octadecanoyl-2-nonanoyl-sn-glycero-3-phosphocholine + H2O = nonanoate + 1-octadecanoyl-sn-glycero-3-phosphocholine + H(+)</text>
        <dbReference type="Rhea" id="RHEA:54472"/>
        <dbReference type="ChEBI" id="CHEBI:15377"/>
        <dbReference type="ChEBI" id="CHEBI:15378"/>
        <dbReference type="ChEBI" id="CHEBI:32361"/>
        <dbReference type="ChEBI" id="CHEBI:73858"/>
        <dbReference type="ChEBI" id="CHEBI:138214"/>
    </reaction>
    <physiologicalReaction direction="left-to-right" evidence="8">
        <dbReference type="Rhea" id="RHEA:54473"/>
    </physiologicalReaction>
</comment>
<comment type="catalytic activity">
    <reaction evidence="4">
        <text>1-O-hexadecyl-2-nonadioyl-sn-glycero-3-phosphocholine + H2O = nonanedioate + 1-O-hexadecyl-sn-glycero-3-phosphocholine + H(+)</text>
        <dbReference type="Rhea" id="RHEA:54552"/>
        <dbReference type="ChEBI" id="CHEBI:15377"/>
        <dbReference type="ChEBI" id="CHEBI:15378"/>
        <dbReference type="ChEBI" id="CHEBI:64496"/>
        <dbReference type="ChEBI" id="CHEBI:78208"/>
        <dbReference type="ChEBI" id="CHEBI:138269"/>
    </reaction>
    <physiologicalReaction direction="left-to-right" evidence="8">
        <dbReference type="Rhea" id="RHEA:54553"/>
    </physiologicalReaction>
</comment>
<comment type="catalytic activity">
    <reaction evidence="4">
        <text>1-hexadecanoyl-2-nonadioyl-sn-glycero-3-phosphocholine + H2O = nonanedioate + 1-hexadecanoyl-sn-glycero-3-phosphocholine + H(+)</text>
        <dbReference type="Rhea" id="RHEA:41388"/>
        <dbReference type="ChEBI" id="CHEBI:15377"/>
        <dbReference type="ChEBI" id="CHEBI:15378"/>
        <dbReference type="ChEBI" id="CHEBI:72998"/>
        <dbReference type="ChEBI" id="CHEBI:78207"/>
        <dbReference type="ChEBI" id="CHEBI:78208"/>
    </reaction>
    <physiologicalReaction direction="left-to-right" evidence="8">
        <dbReference type="Rhea" id="RHEA:41389"/>
    </physiologicalReaction>
</comment>
<comment type="catalytic activity">
    <reaction evidence="4">
        <text>1-hexadecanoyl-2-(9-oxononanoyl)-sn-glycero-3-phosphocholine + H2O = 9-oxononanoate + 1-hexadecanoyl-sn-glycero-3-phosphocholine + H(+)</text>
        <dbReference type="Rhea" id="RHEA:41179"/>
        <dbReference type="ChEBI" id="CHEBI:15377"/>
        <dbReference type="ChEBI" id="CHEBI:15378"/>
        <dbReference type="ChEBI" id="CHEBI:61042"/>
        <dbReference type="ChEBI" id="CHEBI:72998"/>
        <dbReference type="ChEBI" id="CHEBI:77812"/>
    </reaction>
    <physiologicalReaction direction="left-to-right" evidence="8">
        <dbReference type="Rhea" id="RHEA:41180"/>
    </physiologicalReaction>
</comment>
<comment type="catalytic activity">
    <reaction evidence="4">
        <text>1-hexadecanoyl-2-(5-oxopentanoyl)-sn-glycero-3-phosphocholine + H2O = 5-oxopentanoate + 1-hexadecanoyl-sn-glycero-3-phosphocholine + H(+)</text>
        <dbReference type="Rhea" id="RHEA:40483"/>
        <dbReference type="ChEBI" id="CHEBI:15377"/>
        <dbReference type="ChEBI" id="CHEBI:15378"/>
        <dbReference type="ChEBI" id="CHEBI:16120"/>
        <dbReference type="ChEBI" id="CHEBI:72998"/>
        <dbReference type="ChEBI" id="CHEBI:77890"/>
    </reaction>
    <physiologicalReaction direction="left-to-right" evidence="8">
        <dbReference type="Rhea" id="RHEA:40484"/>
    </physiologicalReaction>
</comment>
<comment type="catalytic activity">
    <reaction evidence="4">
        <text>1-hexadecanoyl-2-glutaroyl-sn-glycero-3-phosphocholine + H2O = glutarate + 1-hexadecanoyl-sn-glycero-3-phosphocholine + H(+)</text>
        <dbReference type="Rhea" id="RHEA:41159"/>
        <dbReference type="ChEBI" id="CHEBI:15377"/>
        <dbReference type="ChEBI" id="CHEBI:15378"/>
        <dbReference type="ChEBI" id="CHEBI:30921"/>
        <dbReference type="ChEBI" id="CHEBI:72998"/>
        <dbReference type="ChEBI" id="CHEBI:77756"/>
    </reaction>
    <physiologicalReaction direction="left-to-right" evidence="8">
        <dbReference type="Rhea" id="RHEA:41160"/>
    </physiologicalReaction>
</comment>
<comment type="catalytic activity">
    <reaction evidence="4">
        <text>1-O-hexadecyl-2-acetyl-sn-glycero-3-phosphocholine + H2O = 1-O-hexadecyl-sn-glycero-3-phosphocholine + acetate + H(+)</text>
        <dbReference type="Rhea" id="RHEA:40479"/>
        <dbReference type="ChEBI" id="CHEBI:15377"/>
        <dbReference type="ChEBI" id="CHEBI:15378"/>
        <dbReference type="ChEBI" id="CHEBI:30089"/>
        <dbReference type="ChEBI" id="CHEBI:44811"/>
        <dbReference type="ChEBI" id="CHEBI:64496"/>
    </reaction>
    <physiologicalReaction direction="left-to-right" evidence="8">
        <dbReference type="Rhea" id="RHEA:40480"/>
    </physiologicalReaction>
</comment>
<comment type="subcellular location">
    <subcellularLocation>
        <location evidence="7">Membrane</location>
        <topology evidence="7">Single-pass type II membrane protein</topology>
    </subcellularLocation>
</comment>
<comment type="alternative products">
    <event type="alternative splicing"/>
    <isoform>
        <id>Q91ZH7-1</id>
        <name>1</name>
        <sequence type="displayed"/>
    </isoform>
    <isoform>
        <id>Q91ZH7-2</id>
        <name>2</name>
        <sequence type="described" ref="VSP_023564"/>
    </isoform>
</comment>
<comment type="tissue specificity">
    <text evidence="3">Widely expressed with higher expression in liver.</text>
</comment>
<comment type="developmental stage">
    <text evidence="3">Detected in embryos from 7 dpc to 17 dpc.</text>
</comment>
<comment type="disruption phenotype">
    <text evidence="4">Mice lacking Abhd3 are viable, fertile and have normal behavior.</text>
</comment>
<comment type="similarity">
    <text evidence="7">Belongs to the AB hydrolase superfamily. AB hydrolase 4 family.</text>
</comment>
<feature type="chain" id="PRO_0000280209" description="Phospholipase ABHD3">
    <location>
        <begin position="1"/>
        <end position="411"/>
    </location>
</feature>
<feature type="transmembrane region" description="Helical; Signal-anchor for type II membrane protein" evidence="2">
    <location>
        <begin position="25"/>
        <end position="45"/>
    </location>
</feature>
<feature type="domain" description="AB hydrolase-1" evidence="2">
    <location>
        <begin position="140"/>
        <end position="233"/>
    </location>
</feature>
<feature type="active site" description="Charge relay system" evidence="1">
    <location>
        <position position="220"/>
    </location>
</feature>
<feature type="active site" description="Charge relay system" evidence="1">
    <location>
        <position position="346"/>
    </location>
</feature>
<feature type="active site" description="Charge relay system" evidence="1">
    <location>
        <position position="375"/>
    </location>
</feature>
<feature type="splice variant" id="VSP_023564" description="In isoform 2." evidence="6">
    <location>
        <begin position="353"/>
        <end position="356"/>
    </location>
</feature>
<feature type="mutagenesis site" description="Loss of phospholipase activity." evidence="4">
    <original>S</original>
    <variation>A</variation>
    <location>
        <position position="220"/>
    </location>
</feature>
<feature type="sequence conflict" description="In Ref. 2; BAE25790." evidence="7" ref="2">
    <original>E</original>
    <variation>A</variation>
    <location>
        <position position="88"/>
    </location>
</feature>
<feature type="sequence conflict" description="In Ref. 2; BAE25790." evidence="7" ref="2">
    <original>Y</original>
    <variation>H</variation>
    <location>
        <position position="169"/>
    </location>
</feature>
<sequence length="411" mass="46232">MQRLAMDLRVLSRELALYLEHQVRVGFFGSGVGLSLILGFSVAYACYYLSSIAKKPQLVIGGESFSRFLQDHCPVVTETYYPTVWCWESRGQTLLRPFITSKPPVQYRNELIKTADGGQISLDWFDNNNSAYYVDASTRPTILLLPGLTGTSKESYILHMIHLSEELGYRCVVFNNRGVAGESLLTPRTYCCANTEDLEAVVHHVHSLYPGAPFLAAGVSMGGMLLLNYLGKIGSKTPLMAAATFSVGWNTFACSESLERPLNWLLFNYYLTTCLQSSVKKHRHMFVEQIDMDQVMKAKSIREFDKRFTAVMFGYRTLDDYYTDASPNRRLKSVGIPVLCLNATDDVFSPSHAIPIETAKQNPNVALVLTAYGGHIGFLEGIWPRQCTYMDRVFKQFVQAMVEHGHELSNM</sequence>
<evidence type="ECO:0000250" key="1"/>
<evidence type="ECO:0000255" key="2"/>
<evidence type="ECO:0000269" key="3">
    <source>
    </source>
</evidence>
<evidence type="ECO:0000269" key="4">
    <source>
    </source>
</evidence>
<evidence type="ECO:0000303" key="5">
    <source>
    </source>
</evidence>
<evidence type="ECO:0000303" key="6">
    <source>
    </source>
</evidence>
<evidence type="ECO:0000305" key="7"/>
<evidence type="ECO:0000305" key="8">
    <source>
    </source>
</evidence>
<evidence type="ECO:0000312" key="9">
    <source>
        <dbReference type="MGI" id="MGI:2147183"/>
    </source>
</evidence>
<keyword id="KW-0025">Alternative splicing</keyword>
<keyword id="KW-0378">Hydrolase</keyword>
<keyword id="KW-0443">Lipid metabolism</keyword>
<keyword id="KW-0472">Membrane</keyword>
<keyword id="KW-1208">Phospholipid metabolism</keyword>
<keyword id="KW-1185">Reference proteome</keyword>
<keyword id="KW-0719">Serine esterase</keyword>
<keyword id="KW-0735">Signal-anchor</keyword>
<keyword id="KW-0812">Transmembrane</keyword>
<keyword id="KW-1133">Transmembrane helix</keyword>
<proteinExistence type="evidence at protein level"/>
<gene>
    <name evidence="9" type="primary">Abhd3</name>
    <name evidence="5" type="synonym">Labh3</name>
</gene>
<accession>Q91ZH7</accession>
<accession>Q3UNF7</accession>
<dbReference type="EC" id="3.1.1.32" evidence="4"/>
<dbReference type="EC" id="3.1.1.4" evidence="4"/>
<dbReference type="EMBL" id="AF429302">
    <property type="protein sequence ID" value="AAL27565.1"/>
    <property type="molecule type" value="mRNA"/>
</dbReference>
<dbReference type="EMBL" id="AK134676">
    <property type="protein sequence ID" value="BAE22236.1"/>
    <property type="molecule type" value="mRNA"/>
</dbReference>
<dbReference type="EMBL" id="AK144238">
    <property type="protein sequence ID" value="BAE25790.1"/>
    <property type="molecule type" value="mRNA"/>
</dbReference>
<dbReference type="EMBL" id="BC026770">
    <property type="protein sequence ID" value="AAH26770.1"/>
    <property type="molecule type" value="mRNA"/>
</dbReference>
<dbReference type="CCDS" id="CCDS29057.1">
    <molecule id="Q91ZH7-1"/>
</dbReference>
<dbReference type="RefSeq" id="NP_598891.1">
    <molecule id="Q91ZH7-1"/>
    <property type="nucleotide sequence ID" value="NM_134130.1"/>
</dbReference>
<dbReference type="FunCoup" id="Q91ZH7">
    <property type="interactions" value="101"/>
</dbReference>
<dbReference type="STRING" id="10090.ENSMUSP00000113137"/>
<dbReference type="SwissLipids" id="SLP:000001752"/>
<dbReference type="ESTHER" id="mouse-abhd3">
    <property type="family name" value="abh_upf0017"/>
</dbReference>
<dbReference type="GlyGen" id="Q91ZH7">
    <property type="glycosylation" value="1 site, 1 N-linked glycan (1 site)"/>
</dbReference>
<dbReference type="iPTMnet" id="Q91ZH7"/>
<dbReference type="PhosphoSitePlus" id="Q91ZH7"/>
<dbReference type="SwissPalm" id="Q91ZH7"/>
<dbReference type="jPOST" id="Q91ZH7"/>
<dbReference type="PaxDb" id="10090-ENSMUSP00000002549"/>
<dbReference type="ProteomicsDB" id="296435">
    <molecule id="Q91ZH7-1"/>
</dbReference>
<dbReference type="ProteomicsDB" id="296436">
    <molecule id="Q91ZH7-2"/>
</dbReference>
<dbReference type="Antibodypedia" id="2532">
    <property type="antibodies" value="120 antibodies from 24 providers"/>
</dbReference>
<dbReference type="DNASU" id="106861"/>
<dbReference type="Ensembl" id="ENSMUST00000117726.9">
    <molecule id="Q91ZH7-2"/>
    <property type="protein sequence ID" value="ENSMUSP00000112768.3"/>
    <property type="gene ID" value="ENSMUSG00000002475.17"/>
</dbReference>
<dbReference type="Ensembl" id="ENSMUST00000117828.9">
    <molecule id="Q91ZH7-1"/>
    <property type="protein sequence ID" value="ENSMUSP00000113137.3"/>
    <property type="gene ID" value="ENSMUSG00000002475.17"/>
</dbReference>
<dbReference type="GeneID" id="106861"/>
<dbReference type="KEGG" id="mmu:106861"/>
<dbReference type="UCSC" id="uc008eba.1">
    <molecule id="Q91ZH7-1"/>
    <property type="organism name" value="mouse"/>
</dbReference>
<dbReference type="AGR" id="MGI:2147183"/>
<dbReference type="CTD" id="171586"/>
<dbReference type="MGI" id="MGI:2147183">
    <property type="gene designation" value="Abhd3"/>
</dbReference>
<dbReference type="VEuPathDB" id="HostDB:ENSMUSG00000002475"/>
<dbReference type="eggNOG" id="KOG1838">
    <property type="taxonomic scope" value="Eukaryota"/>
</dbReference>
<dbReference type="GeneTree" id="ENSGT00950000182902"/>
<dbReference type="InParanoid" id="Q91ZH7"/>
<dbReference type="OMA" id="LDWHGPH"/>
<dbReference type="OrthoDB" id="247542at2759"/>
<dbReference type="PhylomeDB" id="Q91ZH7"/>
<dbReference type="TreeFam" id="TF313195"/>
<dbReference type="Reactome" id="R-MMU-1483191">
    <property type="pathway name" value="Synthesis of PC"/>
</dbReference>
<dbReference type="BioGRID-ORCS" id="106861">
    <property type="hits" value="2 hits in 78 CRISPR screens"/>
</dbReference>
<dbReference type="ChiTaRS" id="Abhd3">
    <property type="organism name" value="mouse"/>
</dbReference>
<dbReference type="PRO" id="PR:Q91ZH7"/>
<dbReference type="Proteomes" id="UP000000589">
    <property type="component" value="Chromosome 18"/>
</dbReference>
<dbReference type="RNAct" id="Q91ZH7">
    <property type="molecule type" value="protein"/>
</dbReference>
<dbReference type="Bgee" id="ENSMUSG00000002475">
    <property type="expression patterns" value="Expressed in cerebellar nuclear complex and 219 other cell types or tissues"/>
</dbReference>
<dbReference type="ExpressionAtlas" id="Q91ZH7">
    <property type="expression patterns" value="baseline and differential"/>
</dbReference>
<dbReference type="GO" id="GO:0016020">
    <property type="term" value="C:membrane"/>
    <property type="evidence" value="ECO:0007669"/>
    <property type="project" value="UniProtKB-SubCell"/>
</dbReference>
<dbReference type="GO" id="GO:0008970">
    <property type="term" value="F:phospholipase A1 activity"/>
    <property type="evidence" value="ECO:0000250"/>
    <property type="project" value="UniProtKB"/>
</dbReference>
<dbReference type="GO" id="GO:0004623">
    <property type="term" value="F:phospholipase A2 activity"/>
    <property type="evidence" value="ECO:0000250"/>
    <property type="project" value="UniProtKB"/>
</dbReference>
<dbReference type="GO" id="GO:0046470">
    <property type="term" value="P:phosphatidylcholine metabolic process"/>
    <property type="evidence" value="ECO:0000315"/>
    <property type="project" value="UniProtKB"/>
</dbReference>
<dbReference type="FunFam" id="3.40.50.1820:FF:000079">
    <property type="entry name" value="Abhydrolase domain-containing 3"/>
    <property type="match status" value="1"/>
</dbReference>
<dbReference type="Gene3D" id="3.40.50.1820">
    <property type="entry name" value="alpha/beta hydrolase"/>
    <property type="match status" value="1"/>
</dbReference>
<dbReference type="InterPro" id="IPR000073">
    <property type="entry name" value="AB_hydrolase_1"/>
</dbReference>
<dbReference type="InterPro" id="IPR000952">
    <property type="entry name" value="AB_hydrolase_4_CS"/>
</dbReference>
<dbReference type="InterPro" id="IPR050960">
    <property type="entry name" value="AB_hydrolase_4_sf"/>
</dbReference>
<dbReference type="InterPro" id="IPR029058">
    <property type="entry name" value="AB_hydrolase_fold"/>
</dbReference>
<dbReference type="InterPro" id="IPR012020">
    <property type="entry name" value="ABHD4"/>
</dbReference>
<dbReference type="PANTHER" id="PTHR10794">
    <property type="entry name" value="ABHYDROLASE DOMAIN-CONTAINING PROTEIN"/>
    <property type="match status" value="1"/>
</dbReference>
<dbReference type="PANTHER" id="PTHR10794:SF50">
    <property type="entry name" value="PHOSPHOLIPASE ABHD3"/>
    <property type="match status" value="1"/>
</dbReference>
<dbReference type="Pfam" id="PF00561">
    <property type="entry name" value="Abhydrolase_1"/>
    <property type="match status" value="1"/>
</dbReference>
<dbReference type="PIRSF" id="PIRSF005211">
    <property type="entry name" value="Ab_hydro_YheT"/>
    <property type="match status" value="1"/>
</dbReference>
<dbReference type="SUPFAM" id="SSF53474">
    <property type="entry name" value="alpha/beta-Hydrolases"/>
    <property type="match status" value="1"/>
</dbReference>
<dbReference type="PROSITE" id="PS01133">
    <property type="entry name" value="UPF0017"/>
    <property type="match status" value="1"/>
</dbReference>